<accession>C1EP78</accession>
<proteinExistence type="inferred from homology"/>
<protein>
    <recommendedName>
        <fullName evidence="1">Transcription factor FapR</fullName>
    </recommendedName>
    <alternativeName>
        <fullName evidence="1">Fatty acid and phospholipid biosynthesis regulator</fullName>
    </alternativeName>
</protein>
<keyword id="KW-0238">DNA-binding</keyword>
<keyword id="KW-0275">Fatty acid biosynthesis</keyword>
<keyword id="KW-0276">Fatty acid metabolism</keyword>
<keyword id="KW-0444">Lipid biosynthesis</keyword>
<keyword id="KW-0443">Lipid metabolism</keyword>
<keyword id="KW-0678">Repressor</keyword>
<keyword id="KW-0804">Transcription</keyword>
<keyword id="KW-0805">Transcription regulation</keyword>
<sequence>MKKRRSKKERQELLQQTIETNPFITDEDLAEKFQVSIQTVRLDRMELSIPELRERIKHVATKQHEEDVKSLPLEEVVGEIIDIELDRHAISIFEVKVEHVFKRNQIARGHHLFAQANSLAVAVIDEELALTAKSTIRYIRPVKLGERVVAKARVEDVENGKGRTVVKVRSFVGEELVFTGTFEMYRSSNYSEEGNNL</sequence>
<organism>
    <name type="scientific">Bacillus cereus (strain 03BB102)</name>
    <dbReference type="NCBI Taxonomy" id="572264"/>
    <lineage>
        <taxon>Bacteria</taxon>
        <taxon>Bacillati</taxon>
        <taxon>Bacillota</taxon>
        <taxon>Bacilli</taxon>
        <taxon>Bacillales</taxon>
        <taxon>Bacillaceae</taxon>
        <taxon>Bacillus</taxon>
        <taxon>Bacillus cereus group</taxon>
    </lineage>
</organism>
<gene>
    <name evidence="1" type="primary">fapR</name>
    <name type="ordered locus">BCA_3954</name>
</gene>
<reference key="1">
    <citation type="submission" date="2009-02" db="EMBL/GenBank/DDBJ databases">
        <title>Genome sequence of Bacillus cereus 03BB102.</title>
        <authorList>
            <person name="Dodson R.J."/>
            <person name="Jackson P."/>
            <person name="Munk A.C."/>
            <person name="Brettin T."/>
            <person name="Bruce D."/>
            <person name="Detter C."/>
            <person name="Tapia R."/>
            <person name="Han C."/>
            <person name="Sutton G."/>
            <person name="Sims D."/>
        </authorList>
    </citation>
    <scope>NUCLEOTIDE SEQUENCE [LARGE SCALE GENOMIC DNA]</scope>
    <source>
        <strain>03BB102</strain>
    </source>
</reference>
<name>FAPR_BACC3</name>
<dbReference type="EMBL" id="CP001407">
    <property type="protein sequence ID" value="ACO28521.1"/>
    <property type="molecule type" value="Genomic_DNA"/>
</dbReference>
<dbReference type="RefSeq" id="WP_000747353.1">
    <property type="nucleotide sequence ID" value="NZ_CP009318.1"/>
</dbReference>
<dbReference type="SMR" id="C1EP78"/>
<dbReference type="KEGG" id="bcx:BCA_3954"/>
<dbReference type="PATRIC" id="fig|572264.18.peg.3910"/>
<dbReference type="Proteomes" id="UP000002210">
    <property type="component" value="Chromosome"/>
</dbReference>
<dbReference type="GO" id="GO:0003677">
    <property type="term" value="F:DNA binding"/>
    <property type="evidence" value="ECO:0007669"/>
    <property type="project" value="UniProtKB-KW"/>
</dbReference>
<dbReference type="GO" id="GO:0003700">
    <property type="term" value="F:DNA-binding transcription factor activity"/>
    <property type="evidence" value="ECO:0007669"/>
    <property type="project" value="UniProtKB-UniRule"/>
</dbReference>
<dbReference type="GO" id="GO:0006633">
    <property type="term" value="P:fatty acid biosynthetic process"/>
    <property type="evidence" value="ECO:0007669"/>
    <property type="project" value="UniProtKB-KW"/>
</dbReference>
<dbReference type="GO" id="GO:0045892">
    <property type="term" value="P:negative regulation of DNA-templated transcription"/>
    <property type="evidence" value="ECO:0007669"/>
    <property type="project" value="UniProtKB-UniRule"/>
</dbReference>
<dbReference type="GO" id="GO:0045717">
    <property type="term" value="P:negative regulation of fatty acid biosynthetic process"/>
    <property type="evidence" value="ECO:0007669"/>
    <property type="project" value="UniProtKB-UniRule"/>
</dbReference>
<dbReference type="CDD" id="cd03440">
    <property type="entry name" value="hot_dog"/>
    <property type="match status" value="1"/>
</dbReference>
<dbReference type="Gene3D" id="3.10.129.10">
    <property type="entry name" value="Hotdog Thioesterase"/>
    <property type="match status" value="1"/>
</dbReference>
<dbReference type="Gene3D" id="1.10.10.10">
    <property type="entry name" value="Winged helix-like DNA-binding domain superfamily/Winged helix DNA-binding domain"/>
    <property type="match status" value="1"/>
</dbReference>
<dbReference type="HAMAP" id="MF_01814">
    <property type="entry name" value="Transcrip_fact_FapR"/>
    <property type="match status" value="1"/>
</dbReference>
<dbReference type="InterPro" id="IPR029069">
    <property type="entry name" value="HotDog_dom_sf"/>
</dbReference>
<dbReference type="InterPro" id="IPR006683">
    <property type="entry name" value="Thioestr_dom"/>
</dbReference>
<dbReference type="InterPro" id="IPR017275">
    <property type="entry name" value="Transcription_factor_FapR"/>
</dbReference>
<dbReference type="InterPro" id="IPR036388">
    <property type="entry name" value="WH-like_DNA-bd_sf"/>
</dbReference>
<dbReference type="InterPro" id="IPR036390">
    <property type="entry name" value="WH_DNA-bd_sf"/>
</dbReference>
<dbReference type="NCBIfam" id="NF003359">
    <property type="entry name" value="PRK04424.1"/>
    <property type="match status" value="1"/>
</dbReference>
<dbReference type="Pfam" id="PF03061">
    <property type="entry name" value="4HBT"/>
    <property type="match status" value="1"/>
</dbReference>
<dbReference type="PIRSF" id="PIRSF037733">
    <property type="entry name" value="Transcription_factor_FapR"/>
    <property type="match status" value="1"/>
</dbReference>
<dbReference type="SUPFAM" id="SSF54637">
    <property type="entry name" value="Thioesterase/thiol ester dehydrase-isomerase"/>
    <property type="match status" value="1"/>
</dbReference>
<dbReference type="SUPFAM" id="SSF46785">
    <property type="entry name" value="Winged helix' DNA-binding domain"/>
    <property type="match status" value="1"/>
</dbReference>
<feature type="chain" id="PRO_1000187830" description="Transcription factor FapR">
    <location>
        <begin position="1"/>
        <end position="197"/>
    </location>
</feature>
<evidence type="ECO:0000255" key="1">
    <source>
        <dbReference type="HAMAP-Rule" id="MF_01814"/>
    </source>
</evidence>
<comment type="function">
    <text evidence="1">Transcriptional factor involved in regulation of membrane lipid biosynthesis by repressing genes involved in fatty acid and phospholipid metabolism.</text>
</comment>
<comment type="similarity">
    <text evidence="1">Belongs to the FapR family.</text>
</comment>